<comment type="function">
    <text evidence="1 5 6 7 8">Required for correct functioning of the GINS complex, a complex that plays an essential role in the initiation of DNA replication, and progression of DNA replication forks (PubMed:17417653). GINS complex is a core component of CDC45-MCM-GINS (CMG) helicase, the molecular machine that unwinds template DNA during replication, and around which the replisome is built (PubMed:32453425, PubMed:34694004, PubMed:34700328, PubMed:35585232).</text>
</comment>
<comment type="subunit">
    <text evidence="1 2 3 4 5 6 7">Component of the GINS complex which is a heterotetramer of GINS1, GINS2, GINS3 and GINS4 (PubMed:17417653, PubMed:17545466, PubMed:17557111, PubMed:17652513, PubMed:32453425). Forms a stable subcomplex with GINS3. GINS complex interacts with DNA primase in vitro (PubMed:17417653, PubMed:17545466, PubMed:17557111, PubMed:17652513). Component of the CMG helicase complex, a hexameric ring of related MCM2-7 subunits stabilized by CDC45 and the tetrameric GINS complex (PubMed:32453425, PubMed:34694004, PubMed:34700328).</text>
</comment>
<comment type="interaction">
    <interactant intactId="EBI-747491">
        <id>Q9Y248</id>
    </interactant>
    <interactant intactId="EBI-1180783">
        <id>O96017</id>
        <label>CHEK2</label>
    </interactant>
    <organismsDiffer>false</organismsDiffer>
    <experiments>2</experiments>
</comment>
<comment type="interaction">
    <interactant intactId="EBI-747491">
        <id>Q9Y248</id>
    </interactant>
    <interactant intactId="EBI-747500">
        <id>Q9BRT9</id>
        <label>GINS4</label>
    </interactant>
    <organismsDiffer>false</organismsDiffer>
    <experiments>12</experiments>
</comment>
<comment type="interaction">
    <interactant intactId="EBI-747491">
        <id>Q9Y248</id>
    </interactant>
    <interactant intactId="EBI-749378">
        <id>Q9BTE3</id>
        <label>MCMBP</label>
    </interactant>
    <organismsDiffer>false</organismsDiffer>
    <experiments>2</experiments>
</comment>
<comment type="subcellular location">
    <subcellularLocation>
        <location evidence="10">Nucleus</location>
    </subcellularLocation>
    <subcellularLocation>
        <location evidence="10">Chromosome</location>
    </subcellularLocation>
    <text evidence="10">Associates with chromatin.</text>
</comment>
<comment type="mass spectrometry" mass="98373.0" error="13.0" method="Electrospray" evidence="3">
    <text>This is the measured mass for the GINS complex.</text>
</comment>
<comment type="similarity">
    <text evidence="9">Belongs to the GINS2/PSF2 family.</text>
</comment>
<protein>
    <recommendedName>
        <fullName>DNA replication complex GINS protein PSF2</fullName>
    </recommendedName>
    <alternativeName>
        <fullName>GINS complex subunit 2</fullName>
    </alternativeName>
</protein>
<proteinExistence type="evidence at protein level"/>
<organism>
    <name type="scientific">Homo sapiens</name>
    <name type="common">Human</name>
    <dbReference type="NCBI Taxonomy" id="9606"/>
    <lineage>
        <taxon>Eukaryota</taxon>
        <taxon>Metazoa</taxon>
        <taxon>Chordata</taxon>
        <taxon>Craniata</taxon>
        <taxon>Vertebrata</taxon>
        <taxon>Euteleostomi</taxon>
        <taxon>Mammalia</taxon>
        <taxon>Eutheria</taxon>
        <taxon>Euarchontoglires</taxon>
        <taxon>Primates</taxon>
        <taxon>Haplorrhini</taxon>
        <taxon>Catarrhini</taxon>
        <taxon>Hominidae</taxon>
        <taxon>Homo</taxon>
    </lineage>
</organism>
<gene>
    <name evidence="11" type="primary">GINS2</name>
    <name type="synonym">PSF2</name>
    <name type="ORF">CGI-122</name>
    <name type="ORF">DC5</name>
    <name type="ORF">HSPC037</name>
</gene>
<keyword id="KW-0002">3D-structure</keyword>
<keyword id="KW-0007">Acetylation</keyword>
<keyword id="KW-0158">Chromosome</keyword>
<keyword id="KW-0235">DNA replication</keyword>
<keyword id="KW-1017">Isopeptide bond</keyword>
<keyword id="KW-0539">Nucleus</keyword>
<keyword id="KW-0597">Phosphoprotein</keyword>
<keyword id="KW-1267">Proteomics identification</keyword>
<keyword id="KW-1185">Reference proteome</keyword>
<keyword id="KW-0832">Ubl conjugation</keyword>
<feature type="chain" id="PRO_0000194813" description="DNA replication complex GINS protein PSF2">
    <location>
        <begin position="1"/>
        <end position="185"/>
    </location>
</feature>
<feature type="modified residue" description="N-acetylmethionine" evidence="17">
    <location>
        <position position="1"/>
    </location>
</feature>
<feature type="modified residue" description="Phosphothreonine" evidence="19">
    <location>
        <position position="180"/>
    </location>
</feature>
<feature type="modified residue" description="Phosphoserine" evidence="16 18 19 20 21">
    <location>
        <position position="182"/>
    </location>
</feature>
<feature type="cross-link" description="Glycyl lysine isopeptide (Lys-Gly) (interchain with G-Cter in SUMO2)" evidence="22">
    <location>
        <position position="109"/>
    </location>
</feature>
<feature type="helix" evidence="23">
    <location>
        <begin position="3"/>
        <end position="10"/>
    </location>
</feature>
<feature type="strand" evidence="23">
    <location>
        <begin position="13"/>
        <end position="21"/>
    </location>
</feature>
<feature type="strand" evidence="23">
    <location>
        <begin position="26"/>
        <end position="28"/>
    </location>
</feature>
<feature type="strand" evidence="23">
    <location>
        <begin position="31"/>
        <end position="33"/>
    </location>
</feature>
<feature type="strand" evidence="23">
    <location>
        <begin position="42"/>
        <end position="45"/>
    </location>
</feature>
<feature type="helix" evidence="23">
    <location>
        <begin position="46"/>
        <end position="54"/>
    </location>
</feature>
<feature type="strand" evidence="23">
    <location>
        <begin position="57"/>
        <end position="60"/>
    </location>
</feature>
<feature type="helix" evidence="23">
    <location>
        <begin position="68"/>
        <end position="80"/>
    </location>
</feature>
<feature type="strand" evidence="24">
    <location>
        <begin position="81"/>
        <end position="83"/>
    </location>
</feature>
<feature type="helix" evidence="23">
    <location>
        <begin position="92"/>
        <end position="103"/>
    </location>
</feature>
<feature type="helix" evidence="23">
    <location>
        <begin position="104"/>
        <end position="106"/>
    </location>
</feature>
<feature type="strand" evidence="24">
    <location>
        <begin position="107"/>
        <end position="109"/>
    </location>
</feature>
<feature type="helix" evidence="23">
    <location>
        <begin position="110"/>
        <end position="137"/>
    </location>
</feature>
<feature type="strand" evidence="23">
    <location>
        <begin position="141"/>
        <end position="144"/>
    </location>
</feature>
<feature type="helix" evidence="23">
    <location>
        <begin position="150"/>
        <end position="170"/>
    </location>
</feature>
<feature type="turn" evidence="25">
    <location>
        <begin position="172"/>
        <end position="174"/>
    </location>
</feature>
<accession>Q9Y248</accession>
<accession>D3DUM5</accession>
<accession>Q6IAG9</accession>
<reference key="1">
    <citation type="journal article" date="2000" name="Genome Res.">
        <title>Cloning and functional analysis of cDNAs with open reading frames for 300 previously undefined genes expressed in CD34+ hematopoietic stem/progenitor cells.</title>
        <authorList>
            <person name="Zhang Q.-H."/>
            <person name="Ye M."/>
            <person name="Wu X.-Y."/>
            <person name="Ren S.-X."/>
            <person name="Zhao M."/>
            <person name="Zhao C.-J."/>
            <person name="Fu G."/>
            <person name="Shen Y."/>
            <person name="Fan H.-Y."/>
            <person name="Lu G."/>
            <person name="Zhong M."/>
            <person name="Xu X.-R."/>
            <person name="Han Z.-G."/>
            <person name="Zhang J.-W."/>
            <person name="Tao J."/>
            <person name="Huang Q.-H."/>
            <person name="Zhou J."/>
            <person name="Hu G.-X."/>
            <person name="Gu J."/>
            <person name="Chen S.-J."/>
            <person name="Chen Z."/>
        </authorList>
    </citation>
    <scope>NUCLEOTIDE SEQUENCE [LARGE SCALE MRNA]</scope>
    <source>
        <tissue>Umbilical cord blood</tissue>
    </source>
</reference>
<reference key="2">
    <citation type="journal article" date="2000" name="Genome Res.">
        <title>Identification of novel human genes evolutionarily conserved in Caenorhabditis elegans by comparative proteomics.</title>
        <authorList>
            <person name="Lai C.-H."/>
            <person name="Chou C.-Y."/>
            <person name="Ch'ang L.-Y."/>
            <person name="Liu C.-S."/>
            <person name="Lin W.-C."/>
        </authorList>
    </citation>
    <scope>NUCLEOTIDE SEQUENCE [LARGE SCALE MRNA]</scope>
</reference>
<reference key="3">
    <citation type="submission" date="1999-11" db="EMBL/GenBank/DDBJ databases">
        <title>Novel genes expressed in human dendritic cells.</title>
        <authorList>
            <person name="Li Y."/>
            <person name="Peng Y."/>
            <person name="Li N."/>
            <person name="Gu W."/>
            <person name="Han Z."/>
            <person name="Fu G."/>
            <person name="Chen Z."/>
        </authorList>
    </citation>
    <scope>NUCLEOTIDE SEQUENCE [LARGE SCALE MRNA]</scope>
    <source>
        <tissue>Dendritic cell</tissue>
    </source>
</reference>
<reference key="4">
    <citation type="journal article" date="2004" name="Nat. Genet.">
        <title>Complete sequencing and characterization of 21,243 full-length human cDNAs.</title>
        <authorList>
            <person name="Ota T."/>
            <person name="Suzuki Y."/>
            <person name="Nishikawa T."/>
            <person name="Otsuki T."/>
            <person name="Sugiyama T."/>
            <person name="Irie R."/>
            <person name="Wakamatsu A."/>
            <person name="Hayashi K."/>
            <person name="Sato H."/>
            <person name="Nagai K."/>
            <person name="Kimura K."/>
            <person name="Makita H."/>
            <person name="Sekine M."/>
            <person name="Obayashi M."/>
            <person name="Nishi T."/>
            <person name="Shibahara T."/>
            <person name="Tanaka T."/>
            <person name="Ishii S."/>
            <person name="Yamamoto J."/>
            <person name="Saito K."/>
            <person name="Kawai Y."/>
            <person name="Isono Y."/>
            <person name="Nakamura Y."/>
            <person name="Nagahari K."/>
            <person name="Murakami K."/>
            <person name="Yasuda T."/>
            <person name="Iwayanagi T."/>
            <person name="Wagatsuma M."/>
            <person name="Shiratori A."/>
            <person name="Sudo H."/>
            <person name="Hosoiri T."/>
            <person name="Kaku Y."/>
            <person name="Kodaira H."/>
            <person name="Kondo H."/>
            <person name="Sugawara M."/>
            <person name="Takahashi M."/>
            <person name="Kanda K."/>
            <person name="Yokoi T."/>
            <person name="Furuya T."/>
            <person name="Kikkawa E."/>
            <person name="Omura Y."/>
            <person name="Abe K."/>
            <person name="Kamihara K."/>
            <person name="Katsuta N."/>
            <person name="Sato K."/>
            <person name="Tanikawa M."/>
            <person name="Yamazaki M."/>
            <person name="Ninomiya K."/>
            <person name="Ishibashi T."/>
            <person name="Yamashita H."/>
            <person name="Murakawa K."/>
            <person name="Fujimori K."/>
            <person name="Tanai H."/>
            <person name="Kimata M."/>
            <person name="Watanabe M."/>
            <person name="Hiraoka S."/>
            <person name="Chiba Y."/>
            <person name="Ishida S."/>
            <person name="Ono Y."/>
            <person name="Takiguchi S."/>
            <person name="Watanabe S."/>
            <person name="Yosida M."/>
            <person name="Hotuta T."/>
            <person name="Kusano J."/>
            <person name="Kanehori K."/>
            <person name="Takahashi-Fujii A."/>
            <person name="Hara H."/>
            <person name="Tanase T.-O."/>
            <person name="Nomura Y."/>
            <person name="Togiya S."/>
            <person name="Komai F."/>
            <person name="Hara R."/>
            <person name="Takeuchi K."/>
            <person name="Arita M."/>
            <person name="Imose N."/>
            <person name="Musashino K."/>
            <person name="Yuuki H."/>
            <person name="Oshima A."/>
            <person name="Sasaki N."/>
            <person name="Aotsuka S."/>
            <person name="Yoshikawa Y."/>
            <person name="Matsunawa H."/>
            <person name="Ichihara T."/>
            <person name="Shiohata N."/>
            <person name="Sano S."/>
            <person name="Moriya S."/>
            <person name="Momiyama H."/>
            <person name="Satoh N."/>
            <person name="Takami S."/>
            <person name="Terashima Y."/>
            <person name="Suzuki O."/>
            <person name="Nakagawa S."/>
            <person name="Senoh A."/>
            <person name="Mizoguchi H."/>
            <person name="Goto Y."/>
            <person name="Shimizu F."/>
            <person name="Wakebe H."/>
            <person name="Hishigaki H."/>
            <person name="Watanabe T."/>
            <person name="Sugiyama A."/>
            <person name="Takemoto M."/>
            <person name="Kawakami B."/>
            <person name="Yamazaki M."/>
            <person name="Watanabe K."/>
            <person name="Kumagai A."/>
            <person name="Itakura S."/>
            <person name="Fukuzumi Y."/>
            <person name="Fujimori Y."/>
            <person name="Komiyama M."/>
            <person name="Tashiro H."/>
            <person name="Tanigami A."/>
            <person name="Fujiwara T."/>
            <person name="Ono T."/>
            <person name="Yamada K."/>
            <person name="Fujii Y."/>
            <person name="Ozaki K."/>
            <person name="Hirao M."/>
            <person name="Ohmori Y."/>
            <person name="Kawabata A."/>
            <person name="Hikiji T."/>
            <person name="Kobatake N."/>
            <person name="Inagaki H."/>
            <person name="Ikema Y."/>
            <person name="Okamoto S."/>
            <person name="Okitani R."/>
            <person name="Kawakami T."/>
            <person name="Noguchi S."/>
            <person name="Itoh T."/>
            <person name="Shigeta K."/>
            <person name="Senba T."/>
            <person name="Matsumura K."/>
            <person name="Nakajima Y."/>
            <person name="Mizuno T."/>
            <person name="Morinaga M."/>
            <person name="Sasaki M."/>
            <person name="Togashi T."/>
            <person name="Oyama M."/>
            <person name="Hata H."/>
            <person name="Watanabe M."/>
            <person name="Komatsu T."/>
            <person name="Mizushima-Sugano J."/>
            <person name="Satoh T."/>
            <person name="Shirai Y."/>
            <person name="Takahashi Y."/>
            <person name="Nakagawa K."/>
            <person name="Okumura K."/>
            <person name="Nagase T."/>
            <person name="Nomura N."/>
            <person name="Kikuchi H."/>
            <person name="Masuho Y."/>
            <person name="Yamashita R."/>
            <person name="Nakai K."/>
            <person name="Yada T."/>
            <person name="Nakamura Y."/>
            <person name="Ohara O."/>
            <person name="Isogai T."/>
            <person name="Sugano S."/>
        </authorList>
    </citation>
    <scope>NUCLEOTIDE SEQUENCE [LARGE SCALE MRNA]</scope>
</reference>
<reference key="5">
    <citation type="submission" date="2004-06" db="EMBL/GenBank/DDBJ databases">
        <title>Cloning of human full open reading frames in Gateway(TM) system entry vector (pDONR201).</title>
        <authorList>
            <person name="Ebert L."/>
            <person name="Schick M."/>
            <person name="Neubert P."/>
            <person name="Schatten R."/>
            <person name="Henze S."/>
            <person name="Korn B."/>
        </authorList>
    </citation>
    <scope>NUCLEOTIDE SEQUENCE [LARGE SCALE MRNA]</scope>
</reference>
<reference key="6">
    <citation type="submission" date="2005-09" db="EMBL/GenBank/DDBJ databases">
        <authorList>
            <person name="Mural R.J."/>
            <person name="Istrail S."/>
            <person name="Sutton G.G."/>
            <person name="Florea L."/>
            <person name="Halpern A.L."/>
            <person name="Mobarry C.M."/>
            <person name="Lippert R."/>
            <person name="Walenz B."/>
            <person name="Shatkay H."/>
            <person name="Dew I."/>
            <person name="Miller J.R."/>
            <person name="Flanigan M.J."/>
            <person name="Edwards N.J."/>
            <person name="Bolanos R."/>
            <person name="Fasulo D."/>
            <person name="Halldorsson B.V."/>
            <person name="Hannenhalli S."/>
            <person name="Turner R."/>
            <person name="Yooseph S."/>
            <person name="Lu F."/>
            <person name="Nusskern D.R."/>
            <person name="Shue B.C."/>
            <person name="Zheng X.H."/>
            <person name="Zhong F."/>
            <person name="Delcher A.L."/>
            <person name="Huson D.H."/>
            <person name="Kravitz S.A."/>
            <person name="Mouchard L."/>
            <person name="Reinert K."/>
            <person name="Remington K.A."/>
            <person name="Clark A.G."/>
            <person name="Waterman M.S."/>
            <person name="Eichler E.E."/>
            <person name="Adams M.D."/>
            <person name="Hunkapiller M.W."/>
            <person name="Myers E.W."/>
            <person name="Venter J.C."/>
        </authorList>
    </citation>
    <scope>NUCLEOTIDE SEQUENCE [LARGE SCALE GENOMIC DNA]</scope>
</reference>
<reference key="7">
    <citation type="journal article" date="2004" name="Genome Res.">
        <title>The status, quality, and expansion of the NIH full-length cDNA project: the Mammalian Gene Collection (MGC).</title>
        <authorList>
            <consortium name="The MGC Project Team"/>
        </authorList>
    </citation>
    <scope>NUCLEOTIDE SEQUENCE [LARGE SCALE MRNA]</scope>
    <source>
        <tissue>Brain</tissue>
    </source>
</reference>
<reference key="8">
    <citation type="journal article" date="2007" name="Science">
        <title>ATM and ATR substrate analysis reveals extensive protein networks responsive to DNA damage.</title>
        <authorList>
            <person name="Matsuoka S."/>
            <person name="Ballif B.A."/>
            <person name="Smogorzewska A."/>
            <person name="McDonald E.R. III"/>
            <person name="Hurov K.E."/>
            <person name="Luo J."/>
            <person name="Bakalarski C.E."/>
            <person name="Zhao Z."/>
            <person name="Solimini N."/>
            <person name="Lerenthal Y."/>
            <person name="Shiloh Y."/>
            <person name="Gygi S.P."/>
            <person name="Elledge S.J."/>
        </authorList>
    </citation>
    <scope>PHOSPHORYLATION [LARGE SCALE ANALYSIS] AT SER-182</scope>
    <scope>IDENTIFICATION BY MASS SPECTROMETRY [LARGE SCALE ANALYSIS]</scope>
    <source>
        <tissue>Embryonic kidney</tissue>
    </source>
</reference>
<reference key="9">
    <citation type="journal article" date="2008" name="Proc. Natl. Acad. Sci. U.S.A.">
        <title>A quantitative atlas of mitotic phosphorylation.</title>
        <authorList>
            <person name="Dephoure N."/>
            <person name="Zhou C."/>
            <person name="Villen J."/>
            <person name="Beausoleil S.A."/>
            <person name="Bakalarski C.E."/>
            <person name="Elledge S.J."/>
            <person name="Gygi S.P."/>
        </authorList>
    </citation>
    <scope>IDENTIFICATION BY MASS SPECTROMETRY [LARGE SCALE ANALYSIS]</scope>
    <source>
        <tissue>Cervix carcinoma</tissue>
    </source>
</reference>
<reference key="10">
    <citation type="journal article" date="2009" name="Anal. Chem.">
        <title>Lys-N and trypsin cover complementary parts of the phosphoproteome in a refined SCX-based approach.</title>
        <authorList>
            <person name="Gauci S."/>
            <person name="Helbig A.O."/>
            <person name="Slijper M."/>
            <person name="Krijgsveld J."/>
            <person name="Heck A.J."/>
            <person name="Mohammed S."/>
        </authorList>
    </citation>
    <scope>ACETYLATION [LARGE SCALE ANALYSIS] AT MET-1</scope>
    <scope>IDENTIFICATION BY MASS SPECTROMETRY [LARGE SCALE ANALYSIS]</scope>
</reference>
<reference key="11">
    <citation type="journal article" date="2009" name="Sci. Signal.">
        <title>Quantitative phosphoproteomic analysis of T cell receptor signaling reveals system-wide modulation of protein-protein interactions.</title>
        <authorList>
            <person name="Mayya V."/>
            <person name="Lundgren D.H."/>
            <person name="Hwang S.-I."/>
            <person name="Rezaul K."/>
            <person name="Wu L."/>
            <person name="Eng J.K."/>
            <person name="Rodionov V."/>
            <person name="Han D.K."/>
        </authorList>
    </citation>
    <scope>PHOSPHORYLATION [LARGE SCALE ANALYSIS] AT SER-182</scope>
    <scope>IDENTIFICATION BY MASS SPECTROMETRY [LARGE SCALE ANALYSIS]</scope>
    <source>
        <tissue>Leukemic T-cell</tissue>
    </source>
</reference>
<reference key="12">
    <citation type="journal article" date="2010" name="Sci. Signal.">
        <title>Quantitative phosphoproteomics reveals widespread full phosphorylation site occupancy during mitosis.</title>
        <authorList>
            <person name="Olsen J.V."/>
            <person name="Vermeulen M."/>
            <person name="Santamaria A."/>
            <person name="Kumar C."/>
            <person name="Miller M.L."/>
            <person name="Jensen L.J."/>
            <person name="Gnad F."/>
            <person name="Cox J."/>
            <person name="Jensen T.S."/>
            <person name="Nigg E.A."/>
            <person name="Brunak S."/>
            <person name="Mann M."/>
        </authorList>
    </citation>
    <scope>PHOSPHORYLATION [LARGE SCALE ANALYSIS] AT THR-180 AND SER-182</scope>
    <scope>IDENTIFICATION BY MASS SPECTROMETRY [LARGE SCALE ANALYSIS]</scope>
    <source>
        <tissue>Cervix carcinoma</tissue>
    </source>
</reference>
<reference key="13">
    <citation type="journal article" date="2011" name="BMC Syst. Biol.">
        <title>Initial characterization of the human central proteome.</title>
        <authorList>
            <person name="Burkard T.R."/>
            <person name="Planyavsky M."/>
            <person name="Kaupe I."/>
            <person name="Breitwieser F.P."/>
            <person name="Buerckstuemmer T."/>
            <person name="Bennett K.L."/>
            <person name="Superti-Furga G."/>
            <person name="Colinge J."/>
        </authorList>
    </citation>
    <scope>IDENTIFICATION BY MASS SPECTROMETRY [LARGE SCALE ANALYSIS]</scope>
</reference>
<reference key="14">
    <citation type="journal article" date="2011" name="Sci. Signal.">
        <title>System-wide temporal characterization of the proteome and phosphoproteome of human embryonic stem cell differentiation.</title>
        <authorList>
            <person name="Rigbolt K.T."/>
            <person name="Prokhorova T.A."/>
            <person name="Akimov V."/>
            <person name="Henningsen J."/>
            <person name="Johansen P.T."/>
            <person name="Kratchmarova I."/>
            <person name="Kassem M."/>
            <person name="Mann M."/>
            <person name="Olsen J.V."/>
            <person name="Blagoev B."/>
        </authorList>
    </citation>
    <scope>PHOSPHORYLATION [LARGE SCALE ANALYSIS] AT SER-182</scope>
    <scope>IDENTIFICATION BY MASS SPECTROMETRY [LARGE SCALE ANALYSIS]</scope>
</reference>
<reference key="15">
    <citation type="journal article" date="2013" name="J. Proteome Res.">
        <title>Toward a comprehensive characterization of a human cancer cell phosphoproteome.</title>
        <authorList>
            <person name="Zhou H."/>
            <person name="Di Palma S."/>
            <person name="Preisinger C."/>
            <person name="Peng M."/>
            <person name="Polat A.N."/>
            <person name="Heck A.J."/>
            <person name="Mohammed S."/>
        </authorList>
    </citation>
    <scope>PHOSPHORYLATION [LARGE SCALE ANALYSIS] AT SER-182</scope>
    <scope>IDENTIFICATION BY MASS SPECTROMETRY [LARGE SCALE ANALYSIS]</scope>
    <source>
        <tissue>Erythroleukemia</tissue>
    </source>
</reference>
<reference key="16">
    <citation type="journal article" date="2017" name="Nat. Struct. Mol. Biol.">
        <title>Site-specific mapping of the human SUMO proteome reveals co-modification with phosphorylation.</title>
        <authorList>
            <person name="Hendriks I.A."/>
            <person name="Lyon D."/>
            <person name="Young C."/>
            <person name="Jensen L.J."/>
            <person name="Vertegaal A.C."/>
            <person name="Nielsen M.L."/>
        </authorList>
    </citation>
    <scope>SUMOYLATION [LARGE SCALE ANALYSIS] AT LYS-109</scope>
    <scope>IDENTIFICATION BY MASS SPECTROMETRY [LARGE SCALE ANALYSIS]</scope>
</reference>
<reference key="17">
    <citation type="journal article" date="2022" name="Nature">
        <title>Fast and efficient DNA replication with purified human proteins.</title>
        <authorList>
            <person name="Baris Y."/>
            <person name="Taylor M.R.G."/>
            <person name="Aria V."/>
            <person name="Yeeles J.T.P."/>
        </authorList>
    </citation>
    <scope>FUNCTION</scope>
</reference>
<reference key="18">
    <citation type="journal article" date="2007" name="EMBO Rep.">
        <title>Molecular architecture of the human GINS complex.</title>
        <authorList>
            <person name="Boskovic J."/>
            <person name="Coloma J."/>
            <person name="Aparicio T."/>
            <person name="Zhou M."/>
            <person name="Robinson C.V."/>
            <person name="Mendez J."/>
            <person name="Montoya G."/>
        </authorList>
    </citation>
    <scope>STRUCTURE BY ELECTRON MICROSCOPY (33 ANGSTROMS) IN COMPLEX WITH PSF1; PSF3 AND GINS4</scope>
    <scope>SUBUNIT</scope>
    <scope>MASS SPECTROMETRY OF GINS COMPLEX</scope>
</reference>
<reference key="19">
    <citation type="journal article" date="2007" name="Genes Dev.">
        <title>Crystal structure of the human GINS complex.</title>
        <authorList>
            <person name="Choi J.M."/>
            <person name="Lim H.S."/>
            <person name="Kim J.J."/>
            <person name="Song O.K."/>
            <person name="Cho Y."/>
        </authorList>
    </citation>
    <scope>X-RAY CRYSTALLOGRAPHY (3.0 ANGSTROMS) IN COMPLEX WITH GINS1; GINS3 AND GINS4</scope>
    <scope>SUBUNIT</scope>
</reference>
<reference key="20">
    <citation type="journal article" date="2007" name="Nat. Struct. Mol. Biol.">
        <title>Structure of the human GINS complex and its assembly and functional interface in replication initiation.</title>
        <authorList>
            <person name="Kamada K."/>
            <person name="Kubota Y."/>
            <person name="Arata T."/>
            <person name="Shindo Y."/>
            <person name="Hanaoka F."/>
        </authorList>
    </citation>
    <scope>FUNCTION</scope>
    <scope>X-RAY CRYSTALLOGRAPHY (2.3 ANGSTROMS) IN COMPLEX WITH GINS1; GINS3 AND GINS4</scope>
    <scope>SUBUNIT</scope>
</reference>
<reference key="21">
    <citation type="journal article" date="2007" name="Proc. Natl. Acad. Sci. U.S.A.">
        <title>Crystal structure of the GINS complex and functional insights into its role in DNA replication.</title>
        <authorList>
            <person name="Chang Y.P."/>
            <person name="Wang G."/>
            <person name="Bermudez V."/>
            <person name="Hurwitz J."/>
            <person name="Chen X.S."/>
        </authorList>
    </citation>
    <scope>X-RAY CRYSTALLOGRAPHY (2.36 ANGSTROMS) IN COMPLEX WITH GINS1; GINS3 AND GINS4</scope>
    <scope>SUBUNIT</scope>
    <scope>REGION</scope>
</reference>
<reference evidence="12 13" key="22">
    <citation type="journal article" date="2020" name="Nucleic Acids Res.">
        <title>CryoEM structures of human CMG-ATPgammaS-DNA and CMG-AND-1 complexes.</title>
        <authorList>
            <person name="Rzechorzek N.J."/>
            <person name="Hardwick S.W."/>
            <person name="Jatikusumo V.A."/>
            <person name="Chirgadze D.Y."/>
            <person name="Pellegrini L."/>
        </authorList>
    </citation>
    <scope>STRUCTURE BY ELECTRON MICROSCOPY (3.29 ANGSTROMS) IN CMG COMPLEX</scope>
    <scope>SUBUNIT</scope>
    <scope>FUNCTION</scope>
</reference>
<reference evidence="14" key="23">
    <citation type="journal article" date="2021" name="EMBO J.">
        <title>Structure of a human replisome shows the organisation and interactions of a DNA replication machine.</title>
        <authorList>
            <person name="Jones M.L."/>
            <person name="Baris Y."/>
            <person name="Taylor M.R.G."/>
            <person name="Yeeles J.T.P."/>
        </authorList>
    </citation>
    <scope>STRUCTURE BY ELECTRON MICROSCOPY (3.20 ANGSTROMS) IN REPLISOME</scope>
    <scope>SUBUNIT</scope>
    <scope>FUNCTION</scope>
</reference>
<reference evidence="15" key="24">
    <citation type="journal article" date="2021" name="Nature">
        <title>A conserved mechanism for regulating replisome disassembly in eukaryotes.</title>
        <authorList>
            <person name="Jenkyn-Bedford M."/>
            <person name="Jones M.L."/>
            <person name="Baris Y."/>
            <person name="Labib K.P.M."/>
            <person name="Cannone G."/>
            <person name="Yeeles J.T.P."/>
            <person name="Deegan T.D."/>
        </authorList>
    </citation>
    <scope>STRUCTURE BY ELECTRON MICROSCOPY (2.80 ANGSTROMS) IN REPLISOME</scope>
    <scope>SUBUNIT</scope>
    <scope>FUNCTION</scope>
</reference>
<dbReference type="EMBL" id="AF125098">
    <property type="protein sequence ID" value="AAD39915.1"/>
    <property type="molecule type" value="mRNA"/>
</dbReference>
<dbReference type="EMBL" id="AF151880">
    <property type="protein sequence ID" value="AAD34117.1"/>
    <property type="molecule type" value="mRNA"/>
</dbReference>
<dbReference type="EMBL" id="AF201939">
    <property type="protein sequence ID" value="AAF86875.1"/>
    <property type="molecule type" value="mRNA"/>
</dbReference>
<dbReference type="EMBL" id="AK001275">
    <property type="protein sequence ID" value="BAA91595.1"/>
    <property type="molecule type" value="mRNA"/>
</dbReference>
<dbReference type="EMBL" id="CR457186">
    <property type="protein sequence ID" value="CAG33467.1"/>
    <property type="molecule type" value="mRNA"/>
</dbReference>
<dbReference type="EMBL" id="CH471114">
    <property type="protein sequence ID" value="EAW95443.1"/>
    <property type="molecule type" value="Genomic_DNA"/>
</dbReference>
<dbReference type="EMBL" id="CH471114">
    <property type="protein sequence ID" value="EAW95444.1"/>
    <property type="molecule type" value="Genomic_DNA"/>
</dbReference>
<dbReference type="EMBL" id="BC003186">
    <property type="protein sequence ID" value="AAH03186.1"/>
    <property type="molecule type" value="mRNA"/>
</dbReference>
<dbReference type="EMBL" id="BC010164">
    <property type="protein sequence ID" value="AAH10164.1"/>
    <property type="molecule type" value="mRNA"/>
</dbReference>
<dbReference type="EMBL" id="BC062444">
    <property type="protein sequence ID" value="AAH62444.1"/>
    <property type="molecule type" value="mRNA"/>
</dbReference>
<dbReference type="CCDS" id="CCDS10953.1"/>
<dbReference type="RefSeq" id="NP_057179.1">
    <property type="nucleotide sequence ID" value="NM_016095.3"/>
</dbReference>
<dbReference type="PDB" id="2E9X">
    <property type="method" value="X-ray"/>
    <property type="resolution" value="2.30 A"/>
    <property type="chains" value="B/F=1-185"/>
</dbReference>
<dbReference type="PDB" id="2EHO">
    <property type="method" value="X-ray"/>
    <property type="resolution" value="3.00 A"/>
    <property type="chains" value="C/G/K=1-185"/>
</dbReference>
<dbReference type="PDB" id="2Q9Q">
    <property type="method" value="X-ray"/>
    <property type="resolution" value="2.36 A"/>
    <property type="chains" value="A/E=1-185"/>
</dbReference>
<dbReference type="PDB" id="6XTX">
    <property type="method" value="EM"/>
    <property type="resolution" value="3.29 A"/>
    <property type="chains" value="B=1-185"/>
</dbReference>
<dbReference type="PDB" id="6XTY">
    <property type="method" value="EM"/>
    <property type="resolution" value="6.77 A"/>
    <property type="chains" value="B=1-185"/>
</dbReference>
<dbReference type="PDB" id="7PFO">
    <property type="method" value="EM"/>
    <property type="resolution" value="3.20 A"/>
    <property type="chains" value="E=1-185"/>
</dbReference>
<dbReference type="PDB" id="7PLO">
    <property type="method" value="EM"/>
    <property type="resolution" value="2.80 A"/>
    <property type="chains" value="E=1-185"/>
</dbReference>
<dbReference type="PDB" id="8B9D">
    <property type="method" value="EM"/>
    <property type="resolution" value="3.40 A"/>
    <property type="chains" value="E=1-185"/>
</dbReference>
<dbReference type="PDB" id="8OK2">
    <property type="method" value="EM"/>
    <property type="resolution" value="4.10 A"/>
    <property type="chains" value="B=1-185"/>
</dbReference>
<dbReference type="PDBsum" id="2E9X"/>
<dbReference type="PDBsum" id="2EHO"/>
<dbReference type="PDBsum" id="2Q9Q"/>
<dbReference type="PDBsum" id="6XTX"/>
<dbReference type="PDBsum" id="6XTY"/>
<dbReference type="PDBsum" id="7PFO"/>
<dbReference type="PDBsum" id="7PLO"/>
<dbReference type="PDBsum" id="8B9D"/>
<dbReference type="PDBsum" id="8OK2"/>
<dbReference type="EMDB" id="EMD-10619"/>
<dbReference type="EMDB" id="EMD-10621"/>
<dbReference type="EMDB" id="EMD-13375"/>
<dbReference type="EMDB" id="EMD-13494"/>
<dbReference type="EMDB" id="EMD-16916"/>
<dbReference type="SMR" id="Q9Y248"/>
<dbReference type="BioGRID" id="119664">
    <property type="interactions" value="50"/>
</dbReference>
<dbReference type="ComplexPortal" id="CPX-787">
    <property type="entry name" value="GINS complex"/>
</dbReference>
<dbReference type="CORUM" id="Q9Y248"/>
<dbReference type="DIP" id="DIP-29332N"/>
<dbReference type="FunCoup" id="Q9Y248">
    <property type="interactions" value="1868"/>
</dbReference>
<dbReference type="IntAct" id="Q9Y248">
    <property type="interactions" value="31"/>
</dbReference>
<dbReference type="MINT" id="Q9Y248"/>
<dbReference type="STRING" id="9606.ENSP00000253462"/>
<dbReference type="GlyGen" id="Q9Y248">
    <property type="glycosylation" value="1 site, 1 O-linked glycan (1 site)"/>
</dbReference>
<dbReference type="iPTMnet" id="Q9Y248"/>
<dbReference type="PhosphoSitePlus" id="Q9Y248"/>
<dbReference type="SwissPalm" id="Q9Y248"/>
<dbReference type="BioMuta" id="GINS2"/>
<dbReference type="DMDM" id="37999822"/>
<dbReference type="jPOST" id="Q9Y248"/>
<dbReference type="MassIVE" id="Q9Y248"/>
<dbReference type="PaxDb" id="9606-ENSP00000253462"/>
<dbReference type="PeptideAtlas" id="Q9Y248"/>
<dbReference type="ProteomicsDB" id="85645"/>
<dbReference type="Pumba" id="Q9Y248"/>
<dbReference type="Antibodypedia" id="30642">
    <property type="antibodies" value="213 antibodies from 26 providers"/>
</dbReference>
<dbReference type="DNASU" id="51659"/>
<dbReference type="Ensembl" id="ENST00000253462.8">
    <property type="protein sequence ID" value="ENSP00000253462.3"/>
    <property type="gene ID" value="ENSG00000131153.9"/>
</dbReference>
<dbReference type="GeneID" id="51659"/>
<dbReference type="KEGG" id="hsa:51659"/>
<dbReference type="MANE-Select" id="ENST00000253462.8">
    <property type="protein sequence ID" value="ENSP00000253462.3"/>
    <property type="RefSeq nucleotide sequence ID" value="NM_016095.3"/>
    <property type="RefSeq protein sequence ID" value="NP_057179.1"/>
</dbReference>
<dbReference type="UCSC" id="uc002fja.4">
    <property type="organism name" value="human"/>
</dbReference>
<dbReference type="AGR" id="HGNC:24575"/>
<dbReference type="CTD" id="51659"/>
<dbReference type="DisGeNET" id="51659"/>
<dbReference type="GeneCards" id="GINS2"/>
<dbReference type="HGNC" id="HGNC:24575">
    <property type="gene designation" value="GINS2"/>
</dbReference>
<dbReference type="HPA" id="ENSG00000131153">
    <property type="expression patterns" value="Tissue enhanced (bone)"/>
</dbReference>
<dbReference type="MalaCards" id="GINS2"/>
<dbReference type="MIM" id="610609">
    <property type="type" value="gene"/>
</dbReference>
<dbReference type="neXtProt" id="NX_Q9Y248"/>
<dbReference type="OpenTargets" id="ENSG00000131153"/>
<dbReference type="PharmGKB" id="PA145008313"/>
<dbReference type="VEuPathDB" id="HostDB:ENSG00000131153"/>
<dbReference type="eggNOG" id="KOG4071">
    <property type="taxonomic scope" value="Eukaryota"/>
</dbReference>
<dbReference type="GeneTree" id="ENSGT00390000007838"/>
<dbReference type="HOGENOM" id="CLU_078274_2_0_1"/>
<dbReference type="InParanoid" id="Q9Y248"/>
<dbReference type="OMA" id="DSLNCMY"/>
<dbReference type="OrthoDB" id="1938138at2759"/>
<dbReference type="PAN-GO" id="Q9Y248">
    <property type="GO annotations" value="2 GO annotations based on evolutionary models"/>
</dbReference>
<dbReference type="PhylomeDB" id="Q9Y248"/>
<dbReference type="TreeFam" id="TF314359"/>
<dbReference type="PathwayCommons" id="Q9Y248"/>
<dbReference type="Reactome" id="R-HSA-176974">
    <property type="pathway name" value="Unwinding of DNA"/>
</dbReference>
<dbReference type="SignaLink" id="Q9Y248"/>
<dbReference type="BioGRID-ORCS" id="51659">
    <property type="hits" value="845 hits in 1171 CRISPR screens"/>
</dbReference>
<dbReference type="ChiTaRS" id="GINS2">
    <property type="organism name" value="human"/>
</dbReference>
<dbReference type="EvolutionaryTrace" id="Q9Y248"/>
<dbReference type="GeneWiki" id="GINS2"/>
<dbReference type="GenomeRNAi" id="51659"/>
<dbReference type="Pharos" id="Q9Y248">
    <property type="development level" value="Tbio"/>
</dbReference>
<dbReference type="PRO" id="PR:Q9Y248"/>
<dbReference type="Proteomes" id="UP000005640">
    <property type="component" value="Chromosome 16"/>
</dbReference>
<dbReference type="RNAct" id="Q9Y248">
    <property type="molecule type" value="protein"/>
</dbReference>
<dbReference type="Bgee" id="ENSG00000131153">
    <property type="expression patterns" value="Expressed in oocyte and 145 other cell types or tissues"/>
</dbReference>
<dbReference type="ExpressionAtlas" id="Q9Y248">
    <property type="expression patterns" value="baseline and differential"/>
</dbReference>
<dbReference type="GO" id="GO:0071162">
    <property type="term" value="C:CMG complex"/>
    <property type="evidence" value="ECO:0000353"/>
    <property type="project" value="ComplexPortal"/>
</dbReference>
<dbReference type="GO" id="GO:0000811">
    <property type="term" value="C:GINS complex"/>
    <property type="evidence" value="ECO:0000353"/>
    <property type="project" value="ComplexPortal"/>
</dbReference>
<dbReference type="GO" id="GO:0005654">
    <property type="term" value="C:nucleoplasm"/>
    <property type="evidence" value="ECO:0000304"/>
    <property type="project" value="Reactome"/>
</dbReference>
<dbReference type="GO" id="GO:0005634">
    <property type="term" value="C:nucleus"/>
    <property type="evidence" value="ECO:0000314"/>
    <property type="project" value="ComplexPortal"/>
</dbReference>
<dbReference type="GO" id="GO:0006260">
    <property type="term" value="P:DNA replication"/>
    <property type="evidence" value="ECO:0007669"/>
    <property type="project" value="UniProtKB-KW"/>
</dbReference>
<dbReference type="GO" id="GO:0000727">
    <property type="term" value="P:double-strand break repair via break-induced replication"/>
    <property type="evidence" value="ECO:0000318"/>
    <property type="project" value="GO_Central"/>
</dbReference>
<dbReference type="CDD" id="cd11712">
    <property type="entry name" value="GINS_A_psf2"/>
    <property type="match status" value="1"/>
</dbReference>
<dbReference type="CDD" id="cd21694">
    <property type="entry name" value="GINS_B_Psf2"/>
    <property type="match status" value="1"/>
</dbReference>
<dbReference type="FunFam" id="1.20.58.1020:FF:000001">
    <property type="entry name" value="DNA replication complex GINS protein PSF2"/>
    <property type="match status" value="1"/>
</dbReference>
<dbReference type="FunFam" id="3.40.5.50:FF:000001">
    <property type="entry name" value="DNA replication complex GINS protein PSF2"/>
    <property type="match status" value="1"/>
</dbReference>
<dbReference type="Gene3D" id="1.20.58.1020">
    <property type="match status" value="1"/>
</dbReference>
<dbReference type="Gene3D" id="3.40.5.50">
    <property type="match status" value="1"/>
</dbReference>
<dbReference type="InterPro" id="IPR021151">
    <property type="entry name" value="GINS_A"/>
</dbReference>
<dbReference type="InterPro" id="IPR036224">
    <property type="entry name" value="GINS_bundle-like_dom_sf"/>
</dbReference>
<dbReference type="InterPro" id="IPR007257">
    <property type="entry name" value="GINS_Psf2"/>
</dbReference>
<dbReference type="InterPro" id="IPR056784">
    <property type="entry name" value="PSF2_N"/>
</dbReference>
<dbReference type="PANTHER" id="PTHR12772">
    <property type="entry name" value="DNA REPLICATION COMPLEX GINS PROTEIN PSF2"/>
    <property type="match status" value="1"/>
</dbReference>
<dbReference type="PANTHER" id="PTHR12772:SF0">
    <property type="entry name" value="DNA REPLICATION COMPLEX GINS PROTEIN PSF2"/>
    <property type="match status" value="1"/>
</dbReference>
<dbReference type="Pfam" id="PF25005">
    <property type="entry name" value="PSF2_N"/>
    <property type="match status" value="1"/>
</dbReference>
<dbReference type="Pfam" id="PF05916">
    <property type="entry name" value="Sld5"/>
    <property type="match status" value="1"/>
</dbReference>
<dbReference type="PIRSF" id="PIRSF028998">
    <property type="entry name" value="GINS_Psf2_subgr"/>
    <property type="match status" value="1"/>
</dbReference>
<dbReference type="SUPFAM" id="SSF158573">
    <property type="entry name" value="GINS helical bundle-like"/>
    <property type="match status" value="1"/>
</dbReference>
<dbReference type="SUPFAM" id="SSF160059">
    <property type="entry name" value="PriA/YqbF domain"/>
    <property type="match status" value="1"/>
</dbReference>
<name>PSF2_HUMAN</name>
<evidence type="ECO:0000269" key="1">
    <source>
    </source>
</evidence>
<evidence type="ECO:0000269" key="2">
    <source>
    </source>
</evidence>
<evidence type="ECO:0000269" key="3">
    <source>
    </source>
</evidence>
<evidence type="ECO:0000269" key="4">
    <source>
    </source>
</evidence>
<evidence type="ECO:0000269" key="5">
    <source>
    </source>
</evidence>
<evidence type="ECO:0000269" key="6">
    <source>
    </source>
</evidence>
<evidence type="ECO:0000269" key="7">
    <source>
    </source>
</evidence>
<evidence type="ECO:0000269" key="8">
    <source>
    </source>
</evidence>
<evidence type="ECO:0000305" key="9"/>
<evidence type="ECO:0000305" key="10">
    <source>
    </source>
</evidence>
<evidence type="ECO:0000312" key="11">
    <source>
        <dbReference type="HGNC" id="HGNC:24575"/>
    </source>
</evidence>
<evidence type="ECO:0007744" key="12">
    <source>
        <dbReference type="PDB" id="6XTX"/>
    </source>
</evidence>
<evidence type="ECO:0007744" key="13">
    <source>
        <dbReference type="PDB" id="6XTY"/>
    </source>
</evidence>
<evidence type="ECO:0007744" key="14">
    <source>
        <dbReference type="PDB" id="7PFO"/>
    </source>
</evidence>
<evidence type="ECO:0007744" key="15">
    <source>
        <dbReference type="PDB" id="7PLO"/>
    </source>
</evidence>
<evidence type="ECO:0007744" key="16">
    <source>
    </source>
</evidence>
<evidence type="ECO:0007744" key="17">
    <source>
    </source>
</evidence>
<evidence type="ECO:0007744" key="18">
    <source>
    </source>
</evidence>
<evidence type="ECO:0007744" key="19">
    <source>
    </source>
</evidence>
<evidence type="ECO:0007744" key="20">
    <source>
    </source>
</evidence>
<evidence type="ECO:0007744" key="21">
    <source>
    </source>
</evidence>
<evidence type="ECO:0007744" key="22">
    <source>
    </source>
</evidence>
<evidence type="ECO:0007829" key="23">
    <source>
        <dbReference type="PDB" id="2E9X"/>
    </source>
</evidence>
<evidence type="ECO:0007829" key="24">
    <source>
        <dbReference type="PDB" id="2EHO"/>
    </source>
</evidence>
<evidence type="ECO:0007829" key="25">
    <source>
        <dbReference type="PDB" id="2Q9Q"/>
    </source>
</evidence>
<sequence length="185" mass="21428">MDAAEVEFLAEKELVTIIPNFSLDKIYLIGGDLGPFNPGLPVEVPLWLAINLKQRQKCRLLPPEWMDVEKLEKMRDHERKEETFTPMPSPYYMELTKLLLNHASDNIPKADEIRTLVKDMWDTRIAKLRVSADSFVRQQEAHAKLDNLTLMEINTSGTFLTQALNHMYKLRTNLQPLESTQSQDF</sequence>